<proteinExistence type="inferred from homology"/>
<evidence type="ECO:0000250" key="1"/>
<evidence type="ECO:0000256" key="2">
    <source>
        <dbReference type="SAM" id="MobiDB-lite"/>
    </source>
</evidence>
<evidence type="ECO:0000305" key="3"/>
<protein>
    <recommendedName>
        <fullName>Histone H4 variant TH091</fullName>
    </recommendedName>
</protein>
<organism>
    <name type="scientific">Triticum aestivum</name>
    <name type="common">Wheat</name>
    <dbReference type="NCBI Taxonomy" id="4565"/>
    <lineage>
        <taxon>Eukaryota</taxon>
        <taxon>Viridiplantae</taxon>
        <taxon>Streptophyta</taxon>
        <taxon>Embryophyta</taxon>
        <taxon>Tracheophyta</taxon>
        <taxon>Spermatophyta</taxon>
        <taxon>Magnoliopsida</taxon>
        <taxon>Liliopsida</taxon>
        <taxon>Poales</taxon>
        <taxon>Poaceae</taxon>
        <taxon>BOP clade</taxon>
        <taxon>Pooideae</taxon>
        <taxon>Triticodae</taxon>
        <taxon>Triticeae</taxon>
        <taxon>Triticinae</taxon>
        <taxon>Triticum</taxon>
    </lineage>
</organism>
<sequence>MSGRDKGGKGLGKGGAKRHRKVLRDNIQGITKPAIRRLARRGGVKRISGLIYEETRGVLKIFLENVIRDAVTYTEHARRKTVTAMDVVYALKRQGRTLYGFGG</sequence>
<feature type="initiator methionine" description="Removed" evidence="1">
    <location>
        <position position="1"/>
    </location>
</feature>
<feature type="chain" id="PRO_0000158374" description="Histone H4 variant TH091">
    <location>
        <begin position="2"/>
        <end position="103"/>
    </location>
</feature>
<feature type="DNA-binding region">
    <location>
        <begin position="17"/>
        <end position="21"/>
    </location>
</feature>
<feature type="region of interest" description="Disordered" evidence="2">
    <location>
        <begin position="1"/>
        <end position="20"/>
    </location>
</feature>
<feature type="modified residue" description="N-acetylserine" evidence="1">
    <location>
        <position position="2"/>
    </location>
</feature>
<feature type="modified residue" description="N6-acetyllysine" evidence="1">
    <location>
        <position position="6"/>
    </location>
</feature>
<feature type="modified residue" description="N6-acetyllysine" evidence="1">
    <location>
        <position position="9"/>
    </location>
</feature>
<feature type="modified residue" description="N6-acetyllysine" evidence="1">
    <location>
        <position position="13"/>
    </location>
</feature>
<feature type="modified residue" description="N6-acetyllysine" evidence="1">
    <location>
        <position position="17"/>
    </location>
</feature>
<feature type="modified residue" description="N6-acetyllysine" evidence="1">
    <location>
        <position position="21"/>
    </location>
</feature>
<accession>P62786</accession>
<accession>P02308</accession>
<accession>P59258</accession>
<comment type="function">
    <text>Core component of nucleosome. Nucleosomes wrap and compact DNA into chromatin, limiting DNA accessibility to the cellular machineries which require DNA as a template. Histones thereby play a central role in transcription regulation, DNA repair, DNA replication and chromosomal stability. DNA accessibility is regulated via a complex set of post-translational modifications of histones, also called histone code, and nucleosome remodeling.</text>
</comment>
<comment type="subunit">
    <text>The nucleosome is a histone octamer containing two molecules each of H2A, H2B, H3 and H4 assembled in one H3-H4 heterotetramer and two H2A-H2B heterodimers. The octamer wraps approximately 147 bp of DNA.</text>
</comment>
<comment type="subcellular location">
    <subcellularLocation>
        <location evidence="1">Nucleus</location>
    </subcellularLocation>
    <subcellularLocation>
        <location evidence="1">Chromosome</location>
    </subcellularLocation>
</comment>
<comment type="similarity">
    <text evidence="3">Belongs to the histone H4 family.</text>
</comment>
<name>H42_WHEAT</name>
<reference key="1">
    <citation type="journal article" date="1984" name="Gene">
        <title>Molecular cloning and nucleotide sequence of a variant wheat histone H4 gene.</title>
        <authorList>
            <person name="Tabata T."/>
            <person name="Iwabuchi M."/>
        </authorList>
    </citation>
    <scope>NUCLEOTIDE SEQUENCE [GENOMIC DNA]</scope>
    <source>
        <strain>cv. Horoshirikomugi</strain>
    </source>
</reference>
<dbReference type="EMBL" id="M12277">
    <property type="protein sequence ID" value="AAA34292.1"/>
    <property type="molecule type" value="Genomic_DNA"/>
</dbReference>
<dbReference type="PIR" id="A24967">
    <property type="entry name" value="HSWT41"/>
</dbReference>
<dbReference type="RefSeq" id="NP_001413677.1">
    <property type="nucleotide sequence ID" value="NM_001426748.1"/>
</dbReference>
<dbReference type="SMR" id="P62786"/>
<dbReference type="STRING" id="4565.P62786"/>
<dbReference type="EnsemblPlants" id="TraesARI2D03G01263240.1">
    <property type="protein sequence ID" value="TraesARI2D03G01263240.1.CDS1"/>
    <property type="gene ID" value="TraesARI2D03G01263240"/>
</dbReference>
<dbReference type="EnsemblPlants" id="TraesCAD_scaffold_015810_01G000100.1">
    <property type="protein sequence ID" value="TraesCAD_scaffold_015810_01G000100.1"/>
    <property type="gene ID" value="TraesCAD_scaffold_015810_01G000100"/>
</dbReference>
<dbReference type="EnsemblPlants" id="TraesCLE_scaffold_023708_01G000100.1">
    <property type="protein sequence ID" value="TraesCLE_scaffold_023708_01G000100.1"/>
    <property type="gene ID" value="TraesCLE_scaffold_023708_01G000100"/>
</dbReference>
<dbReference type="EnsemblPlants" id="TraesCS2D02G413100.1">
    <property type="protein sequence ID" value="TraesCS2D02G413100.1.cds1"/>
    <property type="gene ID" value="TraesCS2D02G413100"/>
</dbReference>
<dbReference type="EnsemblPlants" id="TraesCS2D03G0932500.1">
    <property type="protein sequence ID" value="TraesCS2D03G0932500.1.CDS1"/>
    <property type="gene ID" value="TraesCS2D03G0932500"/>
</dbReference>
<dbReference type="EnsemblPlants" id="TraesJAG2D03G01253090.1">
    <property type="protein sequence ID" value="TraesJAG2D03G01253090.1.CDS1"/>
    <property type="gene ID" value="TraesJAG2D03G01253090"/>
</dbReference>
<dbReference type="EnsemblPlants" id="TraesJUL2D03G01254660.1">
    <property type="protein sequence ID" value="TraesJUL2D03G01254660.1.CDS1"/>
    <property type="gene ID" value="TraesJUL2D03G01254660"/>
</dbReference>
<dbReference type="EnsemblPlants" id="TraesKAR2D01G0380980.1">
    <property type="protein sequence ID" value="cds.TraesKAR2D01G0380980.1"/>
    <property type="gene ID" value="TraesKAR2D01G0380980"/>
</dbReference>
<dbReference type="EnsemblPlants" id="TraesLAC2D03G01198350.1">
    <property type="protein sequence ID" value="TraesLAC2D03G01198350.1.CDS1"/>
    <property type="gene ID" value="TraesLAC2D03G01198350"/>
</dbReference>
<dbReference type="EnsemblPlants" id="TraesLDM2D03G01247960.1">
    <property type="protein sequence ID" value="TraesLDM2D03G01247960.1.CDS1"/>
    <property type="gene ID" value="TraesLDM2D03G01247960"/>
</dbReference>
<dbReference type="EnsemblPlants" id="TraesMAC2D03G01245020.1">
    <property type="protein sequence ID" value="TraesMAC2D03G01245020.1.CDS1"/>
    <property type="gene ID" value="TraesMAC2D03G01245020"/>
</dbReference>
<dbReference type="EnsemblPlants" id="TraesNOR2D03G01263340.1">
    <property type="protein sequence ID" value="TraesNOR2D03G01263340.1.CDS1"/>
    <property type="gene ID" value="TraesNOR2D03G01263340"/>
</dbReference>
<dbReference type="EnsemblPlants" id="TraesPARA_EIv1.0_0725590.1">
    <property type="protein sequence ID" value="TraesPARA_EIv1.0_0725590.1.CDS1"/>
    <property type="gene ID" value="TraesPARA_EIv1.0_0725590"/>
</dbReference>
<dbReference type="EnsemblPlants" id="TraesROB_scaffold_072401_01G000200.1">
    <property type="protein sequence ID" value="TraesROB_scaffold_072401_01G000200.1"/>
    <property type="gene ID" value="TraesROB_scaffold_072401_01G000200"/>
</dbReference>
<dbReference type="EnsemblPlants" id="TraesSTA2D03G01235790.1">
    <property type="protein sequence ID" value="TraesSTA2D03G01235790.1.CDS1"/>
    <property type="gene ID" value="TraesSTA2D03G01235790"/>
</dbReference>
<dbReference type="EnsemblPlants" id="TraesSYM2D03G01262460.1">
    <property type="protein sequence ID" value="TraesSYM2D03G01262460.1.CDS1"/>
    <property type="gene ID" value="TraesSYM2D03G01262460"/>
</dbReference>
<dbReference type="EnsemblPlants" id="TraesSYM2D03G01262460.2">
    <property type="protein sequence ID" value="TraesSYM2D03G01262460.2.CDS1"/>
    <property type="gene ID" value="TraesSYM2D03G01262460"/>
</dbReference>
<dbReference type="EnsemblPlants" id="TraesWEE_scaffold_041774_01G000200.1">
    <property type="protein sequence ID" value="TraesWEE_scaffold_041774_01G000200.1"/>
    <property type="gene ID" value="TraesWEE_scaffold_041774_01G000200"/>
</dbReference>
<dbReference type="GeneID" id="123049794"/>
<dbReference type="Gramene" id="TraesARI2D03G01263240.1">
    <property type="protein sequence ID" value="TraesARI2D03G01263240.1.CDS1"/>
    <property type="gene ID" value="TraesARI2D03G01263240"/>
</dbReference>
<dbReference type="Gramene" id="TraesCAD_scaffold_015810_01G000100.1">
    <property type="protein sequence ID" value="TraesCAD_scaffold_015810_01G000100.1"/>
    <property type="gene ID" value="TraesCAD_scaffold_015810_01G000100"/>
</dbReference>
<dbReference type="Gramene" id="TraesCLE_scaffold_023708_01G000100.1">
    <property type="protein sequence ID" value="TraesCLE_scaffold_023708_01G000100.1"/>
    <property type="gene ID" value="TraesCLE_scaffold_023708_01G000100"/>
</dbReference>
<dbReference type="Gramene" id="TraesCS2D02G413100.1">
    <property type="protein sequence ID" value="TraesCS2D02G413100.1.cds1"/>
    <property type="gene ID" value="TraesCS2D02G413100"/>
</dbReference>
<dbReference type="Gramene" id="TraesCS2D03G0932500.1">
    <property type="protein sequence ID" value="TraesCS2D03G0932500.1.CDS1"/>
    <property type="gene ID" value="TraesCS2D03G0932500"/>
</dbReference>
<dbReference type="Gramene" id="TraesJAG2D03G01253090.1">
    <property type="protein sequence ID" value="TraesJAG2D03G01253090.1.CDS1"/>
    <property type="gene ID" value="TraesJAG2D03G01253090"/>
</dbReference>
<dbReference type="Gramene" id="TraesJUL2D03G01254660.1">
    <property type="protein sequence ID" value="TraesJUL2D03G01254660.1.CDS1"/>
    <property type="gene ID" value="TraesJUL2D03G01254660"/>
</dbReference>
<dbReference type="Gramene" id="TraesKAR2D01G0380980.1">
    <property type="protein sequence ID" value="cds.TraesKAR2D01G0380980.1"/>
    <property type="gene ID" value="TraesKAR2D01G0380980"/>
</dbReference>
<dbReference type="Gramene" id="TraesLAC2D03G01198350.1">
    <property type="protein sequence ID" value="TraesLAC2D03G01198350.1.CDS1"/>
    <property type="gene ID" value="TraesLAC2D03G01198350"/>
</dbReference>
<dbReference type="Gramene" id="TraesLDM2D03G01247960.1">
    <property type="protein sequence ID" value="TraesLDM2D03G01247960.1.CDS1"/>
    <property type="gene ID" value="TraesLDM2D03G01247960"/>
</dbReference>
<dbReference type="Gramene" id="TraesMAC2D03G01245020.1">
    <property type="protein sequence ID" value="TraesMAC2D03G01245020.1.CDS1"/>
    <property type="gene ID" value="TraesMAC2D03G01245020"/>
</dbReference>
<dbReference type="Gramene" id="TraesNOR2D03G01263340.1">
    <property type="protein sequence ID" value="TraesNOR2D03G01263340.1.CDS1"/>
    <property type="gene ID" value="TraesNOR2D03G01263340"/>
</dbReference>
<dbReference type="Gramene" id="TraesPARA_EIv1.0_0725590.1">
    <property type="protein sequence ID" value="TraesPARA_EIv1.0_0725590.1.CDS1"/>
    <property type="gene ID" value="TraesPARA_EIv1.0_0725590"/>
</dbReference>
<dbReference type="Gramene" id="TraesROB_scaffold_072401_01G000200.1">
    <property type="protein sequence ID" value="TraesROB_scaffold_072401_01G000200.1"/>
    <property type="gene ID" value="TraesROB_scaffold_072401_01G000200"/>
</dbReference>
<dbReference type="Gramene" id="TraesSTA2D03G01235790.1">
    <property type="protein sequence ID" value="TraesSTA2D03G01235790.1.CDS1"/>
    <property type="gene ID" value="TraesSTA2D03G01235790"/>
</dbReference>
<dbReference type="Gramene" id="TraesSYM2D03G01262460.1">
    <property type="protein sequence ID" value="TraesSYM2D03G01262460.1.CDS1"/>
    <property type="gene ID" value="TraesSYM2D03G01262460"/>
</dbReference>
<dbReference type="Gramene" id="TraesSYM2D03G01262460.2">
    <property type="protein sequence ID" value="TraesSYM2D03G01262460.2.CDS1"/>
    <property type="gene ID" value="TraesSYM2D03G01262460"/>
</dbReference>
<dbReference type="Gramene" id="TraesWEE_scaffold_041774_01G000200.1">
    <property type="protein sequence ID" value="TraesWEE_scaffold_041774_01G000200.1"/>
    <property type="gene ID" value="TraesWEE_scaffold_041774_01G000200"/>
</dbReference>
<dbReference type="OrthoDB" id="660799at2759"/>
<dbReference type="Proteomes" id="UP000019116">
    <property type="component" value="Chromosome 2D"/>
</dbReference>
<dbReference type="GO" id="GO:0000786">
    <property type="term" value="C:nucleosome"/>
    <property type="evidence" value="ECO:0007669"/>
    <property type="project" value="UniProtKB-KW"/>
</dbReference>
<dbReference type="GO" id="GO:0005634">
    <property type="term" value="C:nucleus"/>
    <property type="evidence" value="ECO:0007669"/>
    <property type="project" value="UniProtKB-SubCell"/>
</dbReference>
<dbReference type="GO" id="GO:0003677">
    <property type="term" value="F:DNA binding"/>
    <property type="evidence" value="ECO:0000318"/>
    <property type="project" value="GO_Central"/>
</dbReference>
<dbReference type="GO" id="GO:0046982">
    <property type="term" value="F:protein heterodimerization activity"/>
    <property type="evidence" value="ECO:0007669"/>
    <property type="project" value="InterPro"/>
</dbReference>
<dbReference type="GO" id="GO:0030527">
    <property type="term" value="F:structural constituent of chromatin"/>
    <property type="evidence" value="ECO:0007669"/>
    <property type="project" value="InterPro"/>
</dbReference>
<dbReference type="GO" id="GO:0006334">
    <property type="term" value="P:nucleosome assembly"/>
    <property type="evidence" value="ECO:0000318"/>
    <property type="project" value="GO_Central"/>
</dbReference>
<dbReference type="CDD" id="cd22912">
    <property type="entry name" value="HFD_H4"/>
    <property type="match status" value="1"/>
</dbReference>
<dbReference type="FunFam" id="1.10.20.10:FF:000002">
    <property type="entry name" value="Histone H4"/>
    <property type="match status" value="1"/>
</dbReference>
<dbReference type="Gene3D" id="1.10.20.10">
    <property type="entry name" value="Histone, subunit A"/>
    <property type="match status" value="1"/>
</dbReference>
<dbReference type="InterPro" id="IPR035425">
    <property type="entry name" value="CENP-T/H4_C"/>
</dbReference>
<dbReference type="InterPro" id="IPR009072">
    <property type="entry name" value="Histone-fold"/>
</dbReference>
<dbReference type="InterPro" id="IPR001951">
    <property type="entry name" value="Histone_H4"/>
</dbReference>
<dbReference type="InterPro" id="IPR019809">
    <property type="entry name" value="Histone_H4_CS"/>
</dbReference>
<dbReference type="PANTHER" id="PTHR10484">
    <property type="entry name" value="HISTONE H4"/>
    <property type="match status" value="1"/>
</dbReference>
<dbReference type="Pfam" id="PF15511">
    <property type="entry name" value="CENP-T_C"/>
    <property type="match status" value="1"/>
</dbReference>
<dbReference type="PRINTS" id="PR00623">
    <property type="entry name" value="HISTONEH4"/>
</dbReference>
<dbReference type="SMART" id="SM00417">
    <property type="entry name" value="H4"/>
    <property type="match status" value="1"/>
</dbReference>
<dbReference type="SUPFAM" id="SSF47113">
    <property type="entry name" value="Histone-fold"/>
    <property type="match status" value="1"/>
</dbReference>
<dbReference type="PROSITE" id="PS00047">
    <property type="entry name" value="HISTONE_H4"/>
    <property type="match status" value="1"/>
</dbReference>
<keyword id="KW-0007">Acetylation</keyword>
<keyword id="KW-0158">Chromosome</keyword>
<keyword id="KW-0238">DNA-binding</keyword>
<keyword id="KW-0544">Nucleosome core</keyword>
<keyword id="KW-0539">Nucleus</keyword>
<keyword id="KW-1185">Reference proteome</keyword>